<evidence type="ECO:0000255" key="1">
    <source>
        <dbReference type="HAMAP-Rule" id="MF_01595"/>
    </source>
</evidence>
<evidence type="ECO:0000256" key="2">
    <source>
        <dbReference type="SAM" id="MobiDB-lite"/>
    </source>
</evidence>
<dbReference type="EC" id="2.7.7.8" evidence="1"/>
<dbReference type="EMBL" id="CR628336">
    <property type="protein sequence ID" value="CAH13969.1"/>
    <property type="molecule type" value="Genomic_DNA"/>
</dbReference>
<dbReference type="RefSeq" id="WP_015961799.1">
    <property type="nucleotide sequence ID" value="NC_006368.1"/>
</dbReference>
<dbReference type="SMR" id="Q5X1C7"/>
<dbReference type="KEGG" id="lpp:lpp2816"/>
<dbReference type="LegioList" id="lpp2816"/>
<dbReference type="HOGENOM" id="CLU_004217_2_2_6"/>
<dbReference type="GO" id="GO:0005829">
    <property type="term" value="C:cytosol"/>
    <property type="evidence" value="ECO:0007669"/>
    <property type="project" value="TreeGrafter"/>
</dbReference>
<dbReference type="GO" id="GO:0000175">
    <property type="term" value="F:3'-5'-RNA exonuclease activity"/>
    <property type="evidence" value="ECO:0007669"/>
    <property type="project" value="TreeGrafter"/>
</dbReference>
<dbReference type="GO" id="GO:0000287">
    <property type="term" value="F:magnesium ion binding"/>
    <property type="evidence" value="ECO:0007669"/>
    <property type="project" value="UniProtKB-UniRule"/>
</dbReference>
<dbReference type="GO" id="GO:0004654">
    <property type="term" value="F:polyribonucleotide nucleotidyltransferase activity"/>
    <property type="evidence" value="ECO:0007669"/>
    <property type="project" value="UniProtKB-UniRule"/>
</dbReference>
<dbReference type="GO" id="GO:0003723">
    <property type="term" value="F:RNA binding"/>
    <property type="evidence" value="ECO:0007669"/>
    <property type="project" value="UniProtKB-UniRule"/>
</dbReference>
<dbReference type="GO" id="GO:0006402">
    <property type="term" value="P:mRNA catabolic process"/>
    <property type="evidence" value="ECO:0007669"/>
    <property type="project" value="UniProtKB-UniRule"/>
</dbReference>
<dbReference type="GO" id="GO:0006396">
    <property type="term" value="P:RNA processing"/>
    <property type="evidence" value="ECO:0007669"/>
    <property type="project" value="InterPro"/>
</dbReference>
<dbReference type="CDD" id="cd02393">
    <property type="entry name" value="KH-I_PNPase"/>
    <property type="match status" value="1"/>
</dbReference>
<dbReference type="CDD" id="cd11363">
    <property type="entry name" value="RNase_PH_PNPase_1"/>
    <property type="match status" value="1"/>
</dbReference>
<dbReference type="CDD" id="cd11364">
    <property type="entry name" value="RNase_PH_PNPase_2"/>
    <property type="match status" value="1"/>
</dbReference>
<dbReference type="CDD" id="cd04472">
    <property type="entry name" value="S1_PNPase"/>
    <property type="match status" value="1"/>
</dbReference>
<dbReference type="FunFam" id="3.30.1370.10:FF:000001">
    <property type="entry name" value="Polyribonucleotide nucleotidyltransferase"/>
    <property type="match status" value="1"/>
</dbReference>
<dbReference type="FunFam" id="3.30.230.70:FF:000001">
    <property type="entry name" value="Polyribonucleotide nucleotidyltransferase"/>
    <property type="match status" value="1"/>
</dbReference>
<dbReference type="FunFam" id="3.30.230.70:FF:000002">
    <property type="entry name" value="Polyribonucleotide nucleotidyltransferase"/>
    <property type="match status" value="1"/>
</dbReference>
<dbReference type="FunFam" id="2.40.50.140:FF:000189">
    <property type="entry name" value="Polyribonucleotide nucleotidyltransferase, putative"/>
    <property type="match status" value="1"/>
</dbReference>
<dbReference type="Gene3D" id="3.30.230.70">
    <property type="entry name" value="GHMP Kinase, N-terminal domain"/>
    <property type="match status" value="2"/>
</dbReference>
<dbReference type="Gene3D" id="3.30.1370.10">
    <property type="entry name" value="K Homology domain, type 1"/>
    <property type="match status" value="1"/>
</dbReference>
<dbReference type="Gene3D" id="2.40.50.140">
    <property type="entry name" value="Nucleic acid-binding proteins"/>
    <property type="match status" value="1"/>
</dbReference>
<dbReference type="HAMAP" id="MF_01595">
    <property type="entry name" value="PNPase"/>
    <property type="match status" value="1"/>
</dbReference>
<dbReference type="InterPro" id="IPR001247">
    <property type="entry name" value="ExoRNase_PH_dom1"/>
</dbReference>
<dbReference type="InterPro" id="IPR015847">
    <property type="entry name" value="ExoRNase_PH_dom2"/>
</dbReference>
<dbReference type="InterPro" id="IPR036345">
    <property type="entry name" value="ExoRNase_PH_dom2_sf"/>
</dbReference>
<dbReference type="InterPro" id="IPR004087">
    <property type="entry name" value="KH_dom"/>
</dbReference>
<dbReference type="InterPro" id="IPR004088">
    <property type="entry name" value="KH_dom_type_1"/>
</dbReference>
<dbReference type="InterPro" id="IPR036612">
    <property type="entry name" value="KH_dom_type_1_sf"/>
</dbReference>
<dbReference type="InterPro" id="IPR012340">
    <property type="entry name" value="NA-bd_OB-fold"/>
</dbReference>
<dbReference type="InterPro" id="IPR012162">
    <property type="entry name" value="PNPase"/>
</dbReference>
<dbReference type="InterPro" id="IPR027408">
    <property type="entry name" value="PNPase/RNase_PH_dom_sf"/>
</dbReference>
<dbReference type="InterPro" id="IPR015848">
    <property type="entry name" value="PNPase_PH_RNA-bd_bac/org-type"/>
</dbReference>
<dbReference type="InterPro" id="IPR020568">
    <property type="entry name" value="Ribosomal_Su5_D2-typ_SF"/>
</dbReference>
<dbReference type="InterPro" id="IPR003029">
    <property type="entry name" value="S1_domain"/>
</dbReference>
<dbReference type="NCBIfam" id="TIGR03591">
    <property type="entry name" value="polynuc_phos"/>
    <property type="match status" value="1"/>
</dbReference>
<dbReference type="NCBIfam" id="NF008805">
    <property type="entry name" value="PRK11824.1"/>
    <property type="match status" value="1"/>
</dbReference>
<dbReference type="PANTHER" id="PTHR11252">
    <property type="entry name" value="POLYRIBONUCLEOTIDE NUCLEOTIDYLTRANSFERASE"/>
    <property type="match status" value="1"/>
</dbReference>
<dbReference type="PANTHER" id="PTHR11252:SF0">
    <property type="entry name" value="POLYRIBONUCLEOTIDE NUCLEOTIDYLTRANSFERASE 1, MITOCHONDRIAL"/>
    <property type="match status" value="1"/>
</dbReference>
<dbReference type="Pfam" id="PF00013">
    <property type="entry name" value="KH_1"/>
    <property type="match status" value="1"/>
</dbReference>
<dbReference type="Pfam" id="PF03726">
    <property type="entry name" value="PNPase"/>
    <property type="match status" value="1"/>
</dbReference>
<dbReference type="Pfam" id="PF01138">
    <property type="entry name" value="RNase_PH"/>
    <property type="match status" value="2"/>
</dbReference>
<dbReference type="Pfam" id="PF03725">
    <property type="entry name" value="RNase_PH_C"/>
    <property type="match status" value="2"/>
</dbReference>
<dbReference type="Pfam" id="PF00575">
    <property type="entry name" value="S1"/>
    <property type="match status" value="1"/>
</dbReference>
<dbReference type="PIRSF" id="PIRSF005499">
    <property type="entry name" value="PNPase"/>
    <property type="match status" value="1"/>
</dbReference>
<dbReference type="SMART" id="SM00322">
    <property type="entry name" value="KH"/>
    <property type="match status" value="1"/>
</dbReference>
<dbReference type="SMART" id="SM00316">
    <property type="entry name" value="S1"/>
    <property type="match status" value="1"/>
</dbReference>
<dbReference type="SUPFAM" id="SSF54791">
    <property type="entry name" value="Eukaryotic type KH-domain (KH-domain type I)"/>
    <property type="match status" value="1"/>
</dbReference>
<dbReference type="SUPFAM" id="SSF50249">
    <property type="entry name" value="Nucleic acid-binding proteins"/>
    <property type="match status" value="1"/>
</dbReference>
<dbReference type="SUPFAM" id="SSF55666">
    <property type="entry name" value="Ribonuclease PH domain 2-like"/>
    <property type="match status" value="2"/>
</dbReference>
<dbReference type="SUPFAM" id="SSF54211">
    <property type="entry name" value="Ribosomal protein S5 domain 2-like"/>
    <property type="match status" value="2"/>
</dbReference>
<dbReference type="PROSITE" id="PS50084">
    <property type="entry name" value="KH_TYPE_1"/>
    <property type="match status" value="1"/>
</dbReference>
<dbReference type="PROSITE" id="PS50126">
    <property type="entry name" value="S1"/>
    <property type="match status" value="1"/>
</dbReference>
<organism>
    <name type="scientific">Legionella pneumophila (strain Paris)</name>
    <dbReference type="NCBI Taxonomy" id="297246"/>
    <lineage>
        <taxon>Bacteria</taxon>
        <taxon>Pseudomonadati</taxon>
        <taxon>Pseudomonadota</taxon>
        <taxon>Gammaproteobacteria</taxon>
        <taxon>Legionellales</taxon>
        <taxon>Legionellaceae</taxon>
        <taxon>Legionella</taxon>
    </lineage>
</organism>
<keyword id="KW-0963">Cytoplasm</keyword>
<keyword id="KW-0460">Magnesium</keyword>
<keyword id="KW-0479">Metal-binding</keyword>
<keyword id="KW-0548">Nucleotidyltransferase</keyword>
<keyword id="KW-0694">RNA-binding</keyword>
<keyword id="KW-0808">Transferase</keyword>
<comment type="function">
    <text evidence="1">Involved in mRNA degradation. Catalyzes the phosphorolysis of single-stranded polyribonucleotides processively in the 3'- to 5'-direction.</text>
</comment>
<comment type="catalytic activity">
    <reaction evidence="1">
        <text>RNA(n+1) + phosphate = RNA(n) + a ribonucleoside 5'-diphosphate</text>
        <dbReference type="Rhea" id="RHEA:22096"/>
        <dbReference type="Rhea" id="RHEA-COMP:14527"/>
        <dbReference type="Rhea" id="RHEA-COMP:17342"/>
        <dbReference type="ChEBI" id="CHEBI:43474"/>
        <dbReference type="ChEBI" id="CHEBI:57930"/>
        <dbReference type="ChEBI" id="CHEBI:140395"/>
        <dbReference type="EC" id="2.7.7.8"/>
    </reaction>
</comment>
<comment type="cofactor">
    <cofactor evidence="1">
        <name>Mg(2+)</name>
        <dbReference type="ChEBI" id="CHEBI:18420"/>
    </cofactor>
</comment>
<comment type="subunit">
    <text evidence="1">Component of the RNA degradosome, which is a multiprotein complex involved in RNA processing and mRNA degradation.</text>
</comment>
<comment type="subcellular location">
    <subcellularLocation>
        <location evidence="1">Cytoplasm</location>
    </subcellularLocation>
</comment>
<comment type="similarity">
    <text evidence="1">Belongs to the polyribonucleotide nucleotidyltransferase family.</text>
</comment>
<accession>Q5X1C7</accession>
<feature type="chain" id="PRO_0000329694" description="Polyribonucleotide nucleotidyltransferase">
    <location>
        <begin position="1"/>
        <end position="729"/>
    </location>
</feature>
<feature type="domain" description="KH" evidence="1">
    <location>
        <begin position="552"/>
        <end position="611"/>
    </location>
</feature>
<feature type="domain" description="S1 motif" evidence="1">
    <location>
        <begin position="621"/>
        <end position="689"/>
    </location>
</feature>
<feature type="region of interest" description="Disordered" evidence="2">
    <location>
        <begin position="710"/>
        <end position="729"/>
    </location>
</feature>
<feature type="binding site" evidence="1">
    <location>
        <position position="485"/>
    </location>
    <ligand>
        <name>Mg(2+)</name>
        <dbReference type="ChEBI" id="CHEBI:18420"/>
    </ligand>
</feature>
<feature type="binding site" evidence="1">
    <location>
        <position position="491"/>
    </location>
    <ligand>
        <name>Mg(2+)</name>
        <dbReference type="ChEBI" id="CHEBI:18420"/>
    </ligand>
</feature>
<sequence length="729" mass="80156">MAKITKEIVFGNHKLILETGEVARQADGAVMASMNGTQVLVTVVWKKDSGESNDFFPLTVNYQEKFYAIGKIPGGFNKREGRPSDNETLISRLIDRPIRPLFPDNFFNEVQIIATVLSLNPEVSPDIIAMIGASAALSISGVPFNGPIGAARVGYKDGVYLLNPSRKEQEESKLDLVIAGTKDAILMVESEAQELSEDIMRGAMLYGHEMMKSVIKSIEELAREVGKSKPEWKAPEIDTVLKARINDVARNEVEAAYLIKDKQQRYQRLDELREQTISALLAENDELNADVIANMFGELERSIVRNRILDGEPRIDGRDHRTVRPISIRTKFLERTHGSCLFTRGETQAIVVATLGNERDAQILDGISGETRDRFMLHYNFPPYSVGETGQVGSPKRREIGHGRLAKRALMAVLPDTNEFPYVLRIVSEITESNGSSSMATVCGTSLALMDAGVPLKAPVAGVAMGLIKEGDRYAVLTDILGDEDHLGDMDFKVAGTEKGITALQMDIKISGITNEIMERALEQALEGRTHILGVMNNALAEHRTELSQHAPRITTMKVAEDKIRTIIGKGGATIKGLIESTGVSIDIDDSGVIQLFSPDKMALEEAQKQIKALIAEIEVGQTYQGKVSKIVDFGAFINLLPGKDGLLHISQICAERTQKVEEVLQEGQEIEVFVAGIDKQGRVKLEWKDKPQAEAKEVEGASVSATFLTMEEQSEEINSGNKISEEEE</sequence>
<gene>
    <name evidence="1" type="primary">pnp</name>
    <name type="ordered locus">lpp2816</name>
</gene>
<protein>
    <recommendedName>
        <fullName evidence="1">Polyribonucleotide nucleotidyltransferase</fullName>
        <ecNumber evidence="1">2.7.7.8</ecNumber>
    </recommendedName>
    <alternativeName>
        <fullName evidence="1">Polynucleotide phosphorylase</fullName>
        <shortName evidence="1">PNPase</shortName>
    </alternativeName>
</protein>
<proteinExistence type="inferred from homology"/>
<reference key="1">
    <citation type="journal article" date="2004" name="Nat. Genet.">
        <title>Evidence in the Legionella pneumophila genome for exploitation of host cell functions and high genome plasticity.</title>
        <authorList>
            <person name="Cazalet C."/>
            <person name="Rusniok C."/>
            <person name="Brueggemann H."/>
            <person name="Zidane N."/>
            <person name="Magnier A."/>
            <person name="Ma L."/>
            <person name="Tichit M."/>
            <person name="Jarraud S."/>
            <person name="Bouchier C."/>
            <person name="Vandenesch F."/>
            <person name="Kunst F."/>
            <person name="Etienne J."/>
            <person name="Glaser P."/>
            <person name="Buchrieser C."/>
        </authorList>
    </citation>
    <scope>NUCLEOTIDE SEQUENCE [LARGE SCALE GENOMIC DNA]</scope>
    <source>
        <strain>Paris</strain>
    </source>
</reference>
<name>PNP_LEGPA</name>